<accession>Q0A9T8</accession>
<gene>
    <name evidence="1" type="primary">mltF2</name>
    <name type="ordered locus">Mlg_1046</name>
</gene>
<sequence>MRTWIAILAVVLVLLLNACTDGPEDGPRLEHPDETGVLRVVTRNSATTYYLDRHERAVGPEVALVEAFADHRGWTVDWTVAATTAEVLDYLEAGAAHLAAAGLTHLDSRNQRFERGPAHTEITQQVVCHRDRTDKPRSPEDLEEVVLKVTAASSYVERLEVLAERYDALTFQEDQRGSEQLLMAVEEGRLACTVADSNIVRLNRRYLPHLDVTMDLTEGQNLGWYLAEGQERLAQQAFEWMNSRAGDEVIAAMENRYYTYVGEFDFVDLRALKRRMESRLPRYQRHFEQAEAETDMPADLLAALAYQESHWDPQARSPTGVRGMMMLTGRTAESLGVNDRLDPEQSIMGGARYLADRHERLPEHIPEPDRTFLALASYNVGRGHLLDARQLARDLGRDPDDWQEMREVLPLLSDERYYPNLRYGYARGYEPVHFVARIRNYRDVIRQAFE</sequence>
<protein>
    <recommendedName>
        <fullName evidence="1">Membrane-bound lytic murein transglycosylase F 2</fullName>
        <ecNumber evidence="1">4.2.2.n1</ecNumber>
    </recommendedName>
    <alternativeName>
        <fullName evidence="1">Murein lyase F 2</fullName>
    </alternativeName>
</protein>
<evidence type="ECO:0000255" key="1">
    <source>
        <dbReference type="HAMAP-Rule" id="MF_02016"/>
    </source>
</evidence>
<dbReference type="EC" id="4.2.2.n1" evidence="1"/>
<dbReference type="EMBL" id="CP000453">
    <property type="protein sequence ID" value="ABI56399.1"/>
    <property type="molecule type" value="Genomic_DNA"/>
</dbReference>
<dbReference type="RefSeq" id="WP_011628794.1">
    <property type="nucleotide sequence ID" value="NC_008340.1"/>
</dbReference>
<dbReference type="SMR" id="Q0A9T8"/>
<dbReference type="CAZy" id="GH23">
    <property type="family name" value="Glycoside Hydrolase Family 23"/>
</dbReference>
<dbReference type="KEGG" id="aeh:Mlg_1046"/>
<dbReference type="eggNOG" id="COG4623">
    <property type="taxonomic scope" value="Bacteria"/>
</dbReference>
<dbReference type="HOGENOM" id="CLU_027494_0_1_6"/>
<dbReference type="OrthoDB" id="9815002at2"/>
<dbReference type="Proteomes" id="UP000001962">
    <property type="component" value="Chromosome"/>
</dbReference>
<dbReference type="GO" id="GO:0009279">
    <property type="term" value="C:cell outer membrane"/>
    <property type="evidence" value="ECO:0007669"/>
    <property type="project" value="UniProtKB-SubCell"/>
</dbReference>
<dbReference type="GO" id="GO:0008933">
    <property type="term" value="F:peptidoglycan lytic transglycosylase activity"/>
    <property type="evidence" value="ECO:0007669"/>
    <property type="project" value="UniProtKB-UniRule"/>
</dbReference>
<dbReference type="GO" id="GO:0016998">
    <property type="term" value="P:cell wall macromolecule catabolic process"/>
    <property type="evidence" value="ECO:0007669"/>
    <property type="project" value="UniProtKB-UniRule"/>
</dbReference>
<dbReference type="GO" id="GO:0071555">
    <property type="term" value="P:cell wall organization"/>
    <property type="evidence" value="ECO:0007669"/>
    <property type="project" value="UniProtKB-KW"/>
</dbReference>
<dbReference type="GO" id="GO:0009253">
    <property type="term" value="P:peptidoglycan catabolic process"/>
    <property type="evidence" value="ECO:0007669"/>
    <property type="project" value="TreeGrafter"/>
</dbReference>
<dbReference type="CDD" id="cd13403">
    <property type="entry name" value="MLTF-like"/>
    <property type="match status" value="1"/>
</dbReference>
<dbReference type="CDD" id="cd01009">
    <property type="entry name" value="PBP2_YfhD_N"/>
    <property type="match status" value="1"/>
</dbReference>
<dbReference type="Gene3D" id="1.10.530.10">
    <property type="match status" value="1"/>
</dbReference>
<dbReference type="Gene3D" id="3.40.190.10">
    <property type="entry name" value="Periplasmic binding protein-like II"/>
    <property type="match status" value="2"/>
</dbReference>
<dbReference type="HAMAP" id="MF_02016">
    <property type="entry name" value="MltF"/>
    <property type="match status" value="1"/>
</dbReference>
<dbReference type="InterPro" id="IPR023346">
    <property type="entry name" value="Lysozyme-like_dom_sf"/>
</dbReference>
<dbReference type="InterPro" id="IPR023703">
    <property type="entry name" value="MltF"/>
</dbReference>
<dbReference type="InterPro" id="IPR001638">
    <property type="entry name" value="Solute-binding_3/MltF_N"/>
</dbReference>
<dbReference type="InterPro" id="IPR000189">
    <property type="entry name" value="Transglyc_AS"/>
</dbReference>
<dbReference type="InterPro" id="IPR008258">
    <property type="entry name" value="Transglycosylase_SLT_dom_1"/>
</dbReference>
<dbReference type="NCBIfam" id="NF008112">
    <property type="entry name" value="PRK10859.1"/>
    <property type="match status" value="1"/>
</dbReference>
<dbReference type="PANTHER" id="PTHR35936">
    <property type="entry name" value="MEMBRANE-BOUND LYTIC MUREIN TRANSGLYCOSYLASE F"/>
    <property type="match status" value="1"/>
</dbReference>
<dbReference type="PANTHER" id="PTHR35936:SF32">
    <property type="entry name" value="MEMBRANE-BOUND LYTIC MUREIN TRANSGLYCOSYLASE F"/>
    <property type="match status" value="1"/>
</dbReference>
<dbReference type="Pfam" id="PF00497">
    <property type="entry name" value="SBP_bac_3"/>
    <property type="match status" value="1"/>
</dbReference>
<dbReference type="Pfam" id="PF01464">
    <property type="entry name" value="SLT"/>
    <property type="match status" value="1"/>
</dbReference>
<dbReference type="SMART" id="SM00062">
    <property type="entry name" value="PBPb"/>
    <property type="match status" value="1"/>
</dbReference>
<dbReference type="SUPFAM" id="SSF53955">
    <property type="entry name" value="Lysozyme-like"/>
    <property type="match status" value="1"/>
</dbReference>
<dbReference type="SUPFAM" id="SSF53850">
    <property type="entry name" value="Periplasmic binding protein-like II"/>
    <property type="match status" value="1"/>
</dbReference>
<dbReference type="PROSITE" id="PS00922">
    <property type="entry name" value="TRANSGLYCOSYLASE"/>
    <property type="match status" value="1"/>
</dbReference>
<reference key="1">
    <citation type="submission" date="2006-08" db="EMBL/GenBank/DDBJ databases">
        <title>Complete sequence of Alkalilimnicola ehrilichei MLHE-1.</title>
        <authorList>
            <person name="Copeland A."/>
            <person name="Lucas S."/>
            <person name="Lapidus A."/>
            <person name="Barry K."/>
            <person name="Detter J.C."/>
            <person name="Glavina del Rio T."/>
            <person name="Hammon N."/>
            <person name="Israni S."/>
            <person name="Dalin E."/>
            <person name="Tice H."/>
            <person name="Pitluck S."/>
            <person name="Sims D."/>
            <person name="Brettin T."/>
            <person name="Bruce D."/>
            <person name="Han C."/>
            <person name="Tapia R."/>
            <person name="Gilna P."/>
            <person name="Schmutz J."/>
            <person name="Larimer F."/>
            <person name="Land M."/>
            <person name="Hauser L."/>
            <person name="Kyrpides N."/>
            <person name="Mikhailova N."/>
            <person name="Oremland R.S."/>
            <person name="Hoeft S.E."/>
            <person name="Switzer-Blum J."/>
            <person name="Kulp T."/>
            <person name="King G."/>
            <person name="Tabita R."/>
            <person name="Witte B."/>
            <person name="Santini J.M."/>
            <person name="Basu P."/>
            <person name="Hollibaugh J.T."/>
            <person name="Xie G."/>
            <person name="Stolz J.F."/>
            <person name="Richardson P."/>
        </authorList>
    </citation>
    <scope>NUCLEOTIDE SEQUENCE [LARGE SCALE GENOMIC DNA]</scope>
    <source>
        <strain>ATCC BAA-1101 / DSM 17681 / MLHE-1</strain>
    </source>
</reference>
<keyword id="KW-0998">Cell outer membrane</keyword>
<keyword id="KW-0961">Cell wall biogenesis/degradation</keyword>
<keyword id="KW-0456">Lyase</keyword>
<keyword id="KW-0472">Membrane</keyword>
<keyword id="KW-1185">Reference proteome</keyword>
<keyword id="KW-0732">Signal</keyword>
<proteinExistence type="inferred from homology"/>
<comment type="function">
    <text evidence="1">Murein-degrading enzyme that degrades murein glycan strands and insoluble, high-molecular weight murein sacculi, with the concomitant formation of a 1,6-anhydromuramoyl product. Lytic transglycosylases (LTs) play an integral role in the metabolism of the peptidoglycan (PG) sacculus. Their lytic action creates space within the PG sacculus to allow for its expansion as well as for the insertion of various structures such as secretion systems and flagella.</text>
</comment>
<comment type="catalytic activity">
    <reaction evidence="1">
        <text>Exolytic cleavage of the (1-&gt;4)-beta-glycosidic linkage between N-acetylmuramic acid (MurNAc) and N-acetylglucosamine (GlcNAc) residues in peptidoglycan, from either the reducing or the non-reducing ends of the peptidoglycan chains, with concomitant formation of a 1,6-anhydrobond in the MurNAc residue.</text>
        <dbReference type="EC" id="4.2.2.n1"/>
    </reaction>
</comment>
<comment type="subcellular location">
    <subcellularLocation>
        <location>Cell outer membrane</location>
        <topology>Peripheral membrane protein</topology>
    </subcellularLocation>
    <text evidence="1">Attached to the inner leaflet of the outer membrane.</text>
</comment>
<comment type="domain">
    <text evidence="1">The N-terminal domain does not have lytic activity and probably modulates enzymatic activity. The C-terminal domain is the catalytic active domain.</text>
</comment>
<comment type="similarity">
    <text evidence="1">In the N-terminal section; belongs to the bacterial solute-binding protein 3 family.</text>
</comment>
<comment type="similarity">
    <text evidence="1">In the C-terminal section; belongs to the transglycosylase Slt family.</text>
</comment>
<organism>
    <name type="scientific">Alkalilimnicola ehrlichii (strain ATCC BAA-1101 / DSM 17681 / MLHE-1)</name>
    <dbReference type="NCBI Taxonomy" id="187272"/>
    <lineage>
        <taxon>Bacteria</taxon>
        <taxon>Pseudomonadati</taxon>
        <taxon>Pseudomonadota</taxon>
        <taxon>Gammaproteobacteria</taxon>
        <taxon>Chromatiales</taxon>
        <taxon>Ectothiorhodospiraceae</taxon>
        <taxon>Alkalilimnicola</taxon>
    </lineage>
</organism>
<name>MLTF2_ALKEH</name>
<feature type="signal peptide" evidence="1">
    <location>
        <begin position="1"/>
        <end position="20"/>
    </location>
</feature>
<feature type="chain" id="PRO_5000132782" description="Membrane-bound lytic murein transglycosylase F 2">
    <location>
        <begin position="21"/>
        <end position="450"/>
    </location>
</feature>
<feature type="region of interest" description="Non-LT domain" evidence="1">
    <location>
        <begin position="21"/>
        <end position="261"/>
    </location>
</feature>
<feature type="region of interest" description="LT domain" evidence="1">
    <location>
        <begin position="262"/>
        <end position="450"/>
    </location>
</feature>
<feature type="active site" evidence="1">
    <location>
        <position position="308"/>
    </location>
</feature>